<protein>
    <recommendedName>
        <fullName evidence="5">Hemoglobin subunit alpha</fullName>
    </recommendedName>
</protein>
<sequence length="141" mass="15154">VLSPADKTNLKAAWHKLGGHGGEYGAEALERMFATFPTTKTYFPHFDLSHGSAQVQGHGEKVADALLHAVGNLDDLPGALSALSDLHAHKLRVDPVNFKLLSHCLLVTLAAHHPAEFTPAVHASLDKFLATVSTVLTSKYR</sequence>
<name>HBA_TAMST</name>
<dbReference type="SMR" id="B3EWD9"/>
<dbReference type="GO" id="GO:0072562">
    <property type="term" value="C:blood microparticle"/>
    <property type="evidence" value="ECO:0007669"/>
    <property type="project" value="TreeGrafter"/>
</dbReference>
<dbReference type="GO" id="GO:0031838">
    <property type="term" value="C:haptoglobin-hemoglobin complex"/>
    <property type="evidence" value="ECO:0007669"/>
    <property type="project" value="TreeGrafter"/>
</dbReference>
<dbReference type="GO" id="GO:0005833">
    <property type="term" value="C:hemoglobin complex"/>
    <property type="evidence" value="ECO:0007669"/>
    <property type="project" value="InterPro"/>
</dbReference>
<dbReference type="GO" id="GO:0031720">
    <property type="term" value="F:haptoglobin binding"/>
    <property type="evidence" value="ECO:0007669"/>
    <property type="project" value="TreeGrafter"/>
</dbReference>
<dbReference type="GO" id="GO:0020037">
    <property type="term" value="F:heme binding"/>
    <property type="evidence" value="ECO:0007669"/>
    <property type="project" value="InterPro"/>
</dbReference>
<dbReference type="GO" id="GO:0005506">
    <property type="term" value="F:iron ion binding"/>
    <property type="evidence" value="ECO:0007669"/>
    <property type="project" value="InterPro"/>
</dbReference>
<dbReference type="GO" id="GO:0043177">
    <property type="term" value="F:organic acid binding"/>
    <property type="evidence" value="ECO:0007669"/>
    <property type="project" value="TreeGrafter"/>
</dbReference>
<dbReference type="GO" id="GO:0019825">
    <property type="term" value="F:oxygen binding"/>
    <property type="evidence" value="ECO:0007669"/>
    <property type="project" value="InterPro"/>
</dbReference>
<dbReference type="GO" id="GO:0005344">
    <property type="term" value="F:oxygen carrier activity"/>
    <property type="evidence" value="ECO:0007669"/>
    <property type="project" value="UniProtKB-KW"/>
</dbReference>
<dbReference type="GO" id="GO:0004601">
    <property type="term" value="F:peroxidase activity"/>
    <property type="evidence" value="ECO:0007669"/>
    <property type="project" value="TreeGrafter"/>
</dbReference>
<dbReference type="GO" id="GO:0042744">
    <property type="term" value="P:hydrogen peroxide catabolic process"/>
    <property type="evidence" value="ECO:0007669"/>
    <property type="project" value="TreeGrafter"/>
</dbReference>
<dbReference type="CDD" id="cd08927">
    <property type="entry name" value="Hb-alpha-like"/>
    <property type="match status" value="1"/>
</dbReference>
<dbReference type="FunFam" id="1.10.490.10:FF:000002">
    <property type="entry name" value="Hemoglobin subunit alpha"/>
    <property type="match status" value="1"/>
</dbReference>
<dbReference type="Gene3D" id="1.10.490.10">
    <property type="entry name" value="Globins"/>
    <property type="match status" value="1"/>
</dbReference>
<dbReference type="InterPro" id="IPR000971">
    <property type="entry name" value="Globin"/>
</dbReference>
<dbReference type="InterPro" id="IPR009050">
    <property type="entry name" value="Globin-like_sf"/>
</dbReference>
<dbReference type="InterPro" id="IPR012292">
    <property type="entry name" value="Globin/Proto"/>
</dbReference>
<dbReference type="InterPro" id="IPR002338">
    <property type="entry name" value="Hemoglobin_a-typ"/>
</dbReference>
<dbReference type="InterPro" id="IPR050056">
    <property type="entry name" value="Hemoglobin_oxygen_transport"/>
</dbReference>
<dbReference type="InterPro" id="IPR002339">
    <property type="entry name" value="Hemoglobin_pi"/>
</dbReference>
<dbReference type="PANTHER" id="PTHR11442">
    <property type="entry name" value="HEMOGLOBIN FAMILY MEMBER"/>
    <property type="match status" value="1"/>
</dbReference>
<dbReference type="PANTHER" id="PTHR11442:SF48">
    <property type="entry name" value="HEMOGLOBIN SUBUNIT ALPHA"/>
    <property type="match status" value="1"/>
</dbReference>
<dbReference type="Pfam" id="PF00042">
    <property type="entry name" value="Globin"/>
    <property type="match status" value="1"/>
</dbReference>
<dbReference type="PRINTS" id="PR00612">
    <property type="entry name" value="ALPHAHAEM"/>
</dbReference>
<dbReference type="PRINTS" id="PR00815">
    <property type="entry name" value="PIHAEM"/>
</dbReference>
<dbReference type="SUPFAM" id="SSF46458">
    <property type="entry name" value="Globin-like"/>
    <property type="match status" value="1"/>
</dbReference>
<dbReference type="PROSITE" id="PS01033">
    <property type="entry name" value="GLOBIN"/>
    <property type="match status" value="1"/>
</dbReference>
<feature type="chain" id="PRO_0000415592" description="Hemoglobin subunit alpha">
    <location>
        <begin position="1"/>
        <end position="141"/>
    </location>
</feature>
<feature type="domain" description="Globin" evidence="3">
    <location>
        <begin position="1"/>
        <end position="141"/>
    </location>
</feature>
<feature type="binding site" evidence="3">
    <location>
        <position position="58"/>
    </location>
    <ligand>
        <name>O2</name>
        <dbReference type="ChEBI" id="CHEBI:15379"/>
    </ligand>
</feature>
<feature type="binding site" description="proximal binding residue" evidence="3">
    <location>
        <position position="87"/>
    </location>
    <ligand>
        <name>heme b</name>
        <dbReference type="ChEBI" id="CHEBI:60344"/>
    </ligand>
    <ligandPart>
        <name>Fe</name>
        <dbReference type="ChEBI" id="CHEBI:18248"/>
    </ligandPart>
</feature>
<feature type="modified residue" description="Phosphoserine" evidence="2">
    <location>
        <position position="3"/>
    </location>
</feature>
<feature type="modified residue" description="N6-succinyllysine" evidence="1">
    <location>
        <position position="7"/>
    </location>
</feature>
<feature type="modified residue" description="Phosphothreonine" evidence="2">
    <location>
        <position position="8"/>
    </location>
</feature>
<feature type="modified residue" description="N6-succinyllysine" evidence="1">
    <location>
        <position position="11"/>
    </location>
</feature>
<feature type="modified residue" description="N6-acetyllysine; alternate" evidence="2">
    <location>
        <position position="16"/>
    </location>
</feature>
<feature type="modified residue" description="N6-succinyllysine; alternate" evidence="1">
    <location>
        <position position="16"/>
    </location>
</feature>
<feature type="modified residue" description="Phosphotyrosine" evidence="2">
    <location>
        <position position="24"/>
    </location>
</feature>
<feature type="modified residue" description="N6-succinyllysine" evidence="1">
    <location>
        <position position="40"/>
    </location>
</feature>
<feature type="modified residue" description="Phosphoserine" evidence="2">
    <location>
        <position position="49"/>
    </location>
</feature>
<feature type="modified residue" description="Phosphoserine" evidence="1">
    <location>
        <position position="102"/>
    </location>
</feature>
<feature type="modified residue" description="Phosphothreonine" evidence="1">
    <location>
        <position position="108"/>
    </location>
</feature>
<feature type="modified residue" description="Phosphoserine" evidence="1">
    <location>
        <position position="124"/>
    </location>
</feature>
<feature type="modified residue" description="Phosphothreonine" evidence="1">
    <location>
        <position position="134"/>
    </location>
</feature>
<feature type="modified residue" description="Phosphothreonine" evidence="1">
    <location>
        <position position="137"/>
    </location>
</feature>
<feature type="modified residue" description="Phosphoserine" evidence="1">
    <location>
        <position position="138"/>
    </location>
</feature>
<feature type="unsure residue" description="L or I" evidence="4">
    <location>
        <position position="2"/>
    </location>
</feature>
<feature type="unsure residue" description="L or I" evidence="4">
    <location>
        <position position="10"/>
    </location>
</feature>
<feature type="unsure residue" description="L or I" evidence="4">
    <location>
        <position position="17"/>
    </location>
</feature>
<feature type="unsure residue" description="L or I" evidence="4">
    <location>
        <position position="29"/>
    </location>
</feature>
<feature type="unsure residue" description="L or I" evidence="4">
    <location>
        <position position="48"/>
    </location>
</feature>
<feature type="unsure residue" description="L or I" evidence="4">
    <location>
        <position position="66"/>
    </location>
</feature>
<feature type="unsure residue" description="L or I" evidence="4">
    <location>
        <position position="67"/>
    </location>
</feature>
<feature type="unsure residue" description="L or I" evidence="4">
    <location>
        <position position="73"/>
    </location>
</feature>
<feature type="unsure residue" description="L or I" evidence="4">
    <location>
        <position position="76"/>
    </location>
</feature>
<feature type="unsure residue" description="L or I" evidence="4">
    <location>
        <position position="80"/>
    </location>
</feature>
<feature type="unsure residue" description="L or I" evidence="4">
    <location>
        <position position="83"/>
    </location>
</feature>
<feature type="unsure residue" description="L or I" evidence="4">
    <location>
        <position position="86"/>
    </location>
</feature>
<feature type="unsure residue" description="L or I" evidence="4">
    <location>
        <position position="91"/>
    </location>
</feature>
<feature type="unsure residue" description="L or I" evidence="4">
    <location>
        <position position="100"/>
    </location>
</feature>
<feature type="unsure residue" description="L or I" evidence="4">
    <location>
        <position position="101"/>
    </location>
</feature>
<feature type="unsure residue" description="L or I" evidence="4">
    <location>
        <position position="105"/>
    </location>
</feature>
<feature type="unsure residue" description="L or I" evidence="4">
    <location>
        <position position="106"/>
    </location>
</feature>
<feature type="unsure residue" description="L or I" evidence="4">
    <location>
        <position position="109"/>
    </location>
</feature>
<feature type="unsure residue" description="L or I" evidence="4">
    <location>
        <position position="125"/>
    </location>
</feature>
<feature type="unsure residue" description="L or I" evidence="4">
    <location>
        <position position="129"/>
    </location>
</feature>
<feature type="unsure residue" description="L or I" evidence="4">
    <location>
        <position position="136"/>
    </location>
</feature>
<keyword id="KW-0007">Acetylation</keyword>
<keyword id="KW-0903">Direct protein sequencing</keyword>
<keyword id="KW-0349">Heme</keyword>
<keyword id="KW-0408">Iron</keyword>
<keyword id="KW-0479">Metal-binding</keyword>
<keyword id="KW-0561">Oxygen transport</keyword>
<keyword id="KW-0597">Phosphoprotein</keyword>
<keyword id="KW-0813">Transport</keyword>
<comment type="function">
    <text evidence="6">Involved in oxygen transport from the lung to the various peripheral tissues.</text>
</comment>
<comment type="subunit">
    <text evidence="6">Heterotetramer of two alpha chains and two beta chains.</text>
</comment>
<comment type="tissue specificity">
    <text evidence="6">Red blood cells.</text>
</comment>
<comment type="similarity">
    <text evidence="3">Belongs to the globin family.</text>
</comment>
<accession>B3EWD9</accession>
<proteinExistence type="evidence at protein level"/>
<reference evidence="6" key="1">
    <citation type="journal article" date="2012" name="Biol. Chem.">
        <title>Development of a host blood meal database: de novo sequencing of hemoglobin from nine small mammals using mass spectrometry.</title>
        <authorList>
            <person name="Laskay U.A."/>
            <person name="Burg J."/>
            <person name="Kaleta E.J."/>
            <person name="Vilcins I.M."/>
            <person name="Telford Iii S.R."/>
            <person name="Barbour A.G."/>
            <person name="Wysocki V.H."/>
        </authorList>
    </citation>
    <scope>PROTEIN SEQUENCE</scope>
    <source>
        <tissue evidence="4">Erythrocyte</tissue>
    </source>
</reference>
<organism>
    <name type="scientific">Tamias striatus</name>
    <name type="common">Eastern chipmunk</name>
    <name type="synonym">Sciurus striatus</name>
    <dbReference type="NCBI Taxonomy" id="45474"/>
    <lineage>
        <taxon>Eukaryota</taxon>
        <taxon>Metazoa</taxon>
        <taxon>Chordata</taxon>
        <taxon>Craniata</taxon>
        <taxon>Vertebrata</taxon>
        <taxon>Euteleostomi</taxon>
        <taxon>Mammalia</taxon>
        <taxon>Eutheria</taxon>
        <taxon>Euarchontoglires</taxon>
        <taxon>Glires</taxon>
        <taxon>Rodentia</taxon>
        <taxon>Sciuromorpha</taxon>
        <taxon>Sciuridae</taxon>
        <taxon>Xerinae</taxon>
        <taxon>Marmotini</taxon>
        <taxon>Tamias</taxon>
    </lineage>
</organism>
<evidence type="ECO:0000250" key="1">
    <source>
        <dbReference type="UniProtKB" id="P01942"/>
    </source>
</evidence>
<evidence type="ECO:0000250" key="2">
    <source>
        <dbReference type="UniProtKB" id="P69905"/>
    </source>
</evidence>
<evidence type="ECO:0000255" key="3">
    <source>
        <dbReference type="PROSITE-ProRule" id="PRU00238"/>
    </source>
</evidence>
<evidence type="ECO:0000269" key="4">
    <source>
    </source>
</evidence>
<evidence type="ECO:0000303" key="5">
    <source>
    </source>
</evidence>
<evidence type="ECO:0000305" key="6"/>